<accession>P55306</accession>
<dbReference type="EC" id="1.11.1.6" evidence="3"/>
<dbReference type="EMBL" id="D55675">
    <property type="protein sequence ID" value="BAA09526.1"/>
    <property type="molecule type" value="Genomic_DNA"/>
</dbReference>
<dbReference type="EMBL" id="D89126">
    <property type="protein sequence ID" value="BAA13788.1"/>
    <property type="status" value="ALT_INIT"/>
    <property type="molecule type" value="mRNA"/>
</dbReference>
<dbReference type="EMBL" id="CU329672">
    <property type="protein sequence ID" value="CAA21232.1"/>
    <property type="molecule type" value="Genomic_DNA"/>
</dbReference>
<dbReference type="PIR" id="JC4164">
    <property type="entry name" value="JC4164"/>
</dbReference>
<dbReference type="PIR" id="T42369">
    <property type="entry name" value="T42369"/>
</dbReference>
<dbReference type="RefSeq" id="NP_587682.1">
    <property type="nucleotide sequence ID" value="NM_001022677.2"/>
</dbReference>
<dbReference type="SMR" id="P55306"/>
<dbReference type="BioGRID" id="275983">
    <property type="interactions" value="14"/>
</dbReference>
<dbReference type="FunCoup" id="P55306">
    <property type="interactions" value="299"/>
</dbReference>
<dbReference type="STRING" id="284812.P55306"/>
<dbReference type="PeroxiBase" id="5261">
    <property type="entry name" value="SpomKat01"/>
</dbReference>
<dbReference type="iPTMnet" id="P55306"/>
<dbReference type="PaxDb" id="4896-SPCC757.07c.1"/>
<dbReference type="EnsemblFungi" id="SPCC757.07c.1">
    <property type="protein sequence ID" value="SPCC757.07c.1:pep"/>
    <property type="gene ID" value="SPCC757.07c"/>
</dbReference>
<dbReference type="GeneID" id="2539418"/>
<dbReference type="KEGG" id="spo:2539418"/>
<dbReference type="PomBase" id="SPCC757.07c"/>
<dbReference type="VEuPathDB" id="FungiDB:SPCC757.07c"/>
<dbReference type="eggNOG" id="KOG0047">
    <property type="taxonomic scope" value="Eukaryota"/>
</dbReference>
<dbReference type="HOGENOM" id="CLU_010645_2_0_1"/>
<dbReference type="InParanoid" id="P55306"/>
<dbReference type="OMA" id="KFRWNVF"/>
<dbReference type="PhylomeDB" id="P55306"/>
<dbReference type="Reactome" id="R-SPO-3299685">
    <property type="pathway name" value="Detoxification of Reactive Oxygen Species"/>
</dbReference>
<dbReference type="Reactome" id="R-SPO-6798695">
    <property type="pathway name" value="Neutrophil degranulation"/>
</dbReference>
<dbReference type="Reactome" id="R-SPO-9033241">
    <property type="pathway name" value="Peroxisomal protein import"/>
</dbReference>
<dbReference type="PRO" id="PR:P55306"/>
<dbReference type="Proteomes" id="UP000002485">
    <property type="component" value="Chromosome III"/>
</dbReference>
<dbReference type="GO" id="GO:0005737">
    <property type="term" value="C:cytoplasm"/>
    <property type="evidence" value="ECO:0000318"/>
    <property type="project" value="GO_Central"/>
</dbReference>
<dbReference type="GO" id="GO:0005759">
    <property type="term" value="C:mitochondrial matrix"/>
    <property type="evidence" value="ECO:0000266"/>
    <property type="project" value="PomBase"/>
</dbReference>
<dbReference type="GO" id="GO:0005739">
    <property type="term" value="C:mitochondrion"/>
    <property type="evidence" value="ECO:0000318"/>
    <property type="project" value="GO_Central"/>
</dbReference>
<dbReference type="GO" id="GO:0005782">
    <property type="term" value="C:peroxisomal matrix"/>
    <property type="evidence" value="ECO:0000266"/>
    <property type="project" value="PomBase"/>
</dbReference>
<dbReference type="GO" id="GO:0005777">
    <property type="term" value="C:peroxisome"/>
    <property type="evidence" value="ECO:0000318"/>
    <property type="project" value="GO_Central"/>
</dbReference>
<dbReference type="GO" id="GO:0004096">
    <property type="term" value="F:catalase activity"/>
    <property type="evidence" value="ECO:0000315"/>
    <property type="project" value="PomBase"/>
</dbReference>
<dbReference type="GO" id="GO:0020037">
    <property type="term" value="F:heme binding"/>
    <property type="evidence" value="ECO:0000318"/>
    <property type="project" value="GO_Central"/>
</dbReference>
<dbReference type="GO" id="GO:0046872">
    <property type="term" value="F:metal ion binding"/>
    <property type="evidence" value="ECO:0007669"/>
    <property type="project" value="UniProtKB-KW"/>
</dbReference>
<dbReference type="GO" id="GO:0061692">
    <property type="term" value="P:cellular detoxification of hydrogen peroxide"/>
    <property type="evidence" value="ECO:0000315"/>
    <property type="project" value="PomBase"/>
</dbReference>
<dbReference type="GO" id="GO:0042744">
    <property type="term" value="P:hydrogen peroxide catabolic process"/>
    <property type="evidence" value="ECO:0000315"/>
    <property type="project" value="PomBase"/>
</dbReference>
<dbReference type="GO" id="GO:0042542">
    <property type="term" value="P:response to hydrogen peroxide"/>
    <property type="evidence" value="ECO:0000318"/>
    <property type="project" value="GO_Central"/>
</dbReference>
<dbReference type="CDD" id="cd08157">
    <property type="entry name" value="catalase_fungal"/>
    <property type="match status" value="1"/>
</dbReference>
<dbReference type="FunFam" id="2.40.180.10:FF:000001">
    <property type="entry name" value="Catalase"/>
    <property type="match status" value="1"/>
</dbReference>
<dbReference type="Gene3D" id="2.40.180.10">
    <property type="entry name" value="Catalase core domain"/>
    <property type="match status" value="1"/>
</dbReference>
<dbReference type="InterPro" id="IPR018028">
    <property type="entry name" value="Catalase"/>
</dbReference>
<dbReference type="InterPro" id="IPR024708">
    <property type="entry name" value="Catalase_AS"/>
</dbReference>
<dbReference type="InterPro" id="IPR024711">
    <property type="entry name" value="Catalase_clade1/3"/>
</dbReference>
<dbReference type="InterPro" id="IPR011614">
    <property type="entry name" value="Catalase_core"/>
</dbReference>
<dbReference type="InterPro" id="IPR002226">
    <property type="entry name" value="Catalase_haem_BS"/>
</dbReference>
<dbReference type="InterPro" id="IPR010582">
    <property type="entry name" value="Catalase_immune_responsive"/>
</dbReference>
<dbReference type="InterPro" id="IPR020835">
    <property type="entry name" value="Catalase_sf"/>
</dbReference>
<dbReference type="PANTHER" id="PTHR11465">
    <property type="entry name" value="CATALASE"/>
    <property type="match status" value="1"/>
</dbReference>
<dbReference type="PANTHER" id="PTHR11465:SF9">
    <property type="entry name" value="CATALASE"/>
    <property type="match status" value="1"/>
</dbReference>
<dbReference type="Pfam" id="PF00199">
    <property type="entry name" value="Catalase"/>
    <property type="match status" value="1"/>
</dbReference>
<dbReference type="Pfam" id="PF06628">
    <property type="entry name" value="Catalase-rel"/>
    <property type="match status" value="1"/>
</dbReference>
<dbReference type="PIRSF" id="PIRSF038928">
    <property type="entry name" value="Catalase_clade1-3"/>
    <property type="match status" value="1"/>
</dbReference>
<dbReference type="PRINTS" id="PR00067">
    <property type="entry name" value="CATALASE"/>
</dbReference>
<dbReference type="SMART" id="SM01060">
    <property type="entry name" value="Catalase"/>
    <property type="match status" value="1"/>
</dbReference>
<dbReference type="SUPFAM" id="SSF56634">
    <property type="entry name" value="Heme-dependent catalase-like"/>
    <property type="match status" value="1"/>
</dbReference>
<dbReference type="PROSITE" id="PS00437">
    <property type="entry name" value="CATALASE_1"/>
    <property type="match status" value="1"/>
</dbReference>
<dbReference type="PROSITE" id="PS00438">
    <property type="entry name" value="CATALASE_2"/>
    <property type="match status" value="1"/>
</dbReference>
<dbReference type="PROSITE" id="PS51402">
    <property type="entry name" value="CATALASE_3"/>
    <property type="match status" value="1"/>
</dbReference>
<name>CATA_SCHPO</name>
<protein>
    <recommendedName>
        <fullName>Catalase</fullName>
        <ecNumber evidence="3">1.11.1.6</ecNumber>
    </recommendedName>
</protein>
<organism>
    <name type="scientific">Schizosaccharomyces pombe (strain 972 / ATCC 24843)</name>
    <name type="common">Fission yeast</name>
    <dbReference type="NCBI Taxonomy" id="284812"/>
    <lineage>
        <taxon>Eukaryota</taxon>
        <taxon>Fungi</taxon>
        <taxon>Dikarya</taxon>
        <taxon>Ascomycota</taxon>
        <taxon>Taphrinomycotina</taxon>
        <taxon>Schizosaccharomycetes</taxon>
        <taxon>Schizosaccharomycetales</taxon>
        <taxon>Schizosaccharomycetaceae</taxon>
        <taxon>Schizosaccharomyces</taxon>
    </lineage>
</organism>
<feature type="chain" id="PRO_0000084927" description="Catalase">
    <location>
        <begin position="1"/>
        <end position="512"/>
    </location>
</feature>
<feature type="region of interest" description="Disordered" evidence="4">
    <location>
        <begin position="488"/>
        <end position="512"/>
    </location>
</feature>
<feature type="compositionally biased region" description="Basic and acidic residues" evidence="4">
    <location>
        <begin position="488"/>
        <end position="505"/>
    </location>
</feature>
<feature type="active site" evidence="3">
    <location>
        <position position="60"/>
    </location>
</feature>
<feature type="active site" evidence="3">
    <location>
        <position position="133"/>
    </location>
</feature>
<feature type="binding site" description="axial binding residue" evidence="1">
    <location>
        <position position="344"/>
    </location>
    <ligand>
        <name>heme</name>
        <dbReference type="ChEBI" id="CHEBI:30413"/>
    </ligand>
    <ligandPart>
        <name>Fe</name>
        <dbReference type="ChEBI" id="CHEBI:18248"/>
    </ligandPart>
</feature>
<feature type="modified residue" description="Phosphoserine" evidence="5">
    <location>
        <position position="363"/>
    </location>
</feature>
<keyword id="KW-0903">Direct protein sequencing</keyword>
<keyword id="KW-0349">Heme</keyword>
<keyword id="KW-0376">Hydrogen peroxide</keyword>
<keyword id="KW-0408">Iron</keyword>
<keyword id="KW-0479">Metal-binding</keyword>
<keyword id="KW-0560">Oxidoreductase</keyword>
<keyword id="KW-0575">Peroxidase</keyword>
<keyword id="KW-0576">Peroxisome</keyword>
<keyword id="KW-0597">Phosphoprotein</keyword>
<keyword id="KW-1185">Reference proteome</keyword>
<evidence type="ECO:0000250" key="1">
    <source>
        <dbReference type="UniProtKB" id="P04040"/>
    </source>
</evidence>
<evidence type="ECO:0000250" key="2">
    <source>
        <dbReference type="UniProtKB" id="P15202"/>
    </source>
</evidence>
<evidence type="ECO:0000255" key="3">
    <source>
        <dbReference type="PROSITE-ProRule" id="PRU10013"/>
    </source>
</evidence>
<evidence type="ECO:0000256" key="4">
    <source>
        <dbReference type="SAM" id="MobiDB-lite"/>
    </source>
</evidence>
<evidence type="ECO:0000269" key="5">
    <source>
    </source>
</evidence>
<evidence type="ECO:0000305" key="6"/>
<proteinExistence type="evidence at protein level"/>
<gene>
    <name type="primary">cta1</name>
    <name type="ORF">SPCC757.07c</name>
</gene>
<comment type="function">
    <text evidence="1">Catalyzes the degradation of hydrogen peroxide (H(2)O(2)) generated by peroxisomal oxidases to water and oxygen, thereby protecting cells from the toxic effects of hydrogen peroxide.</text>
</comment>
<comment type="catalytic activity">
    <reaction evidence="3">
        <text>2 H2O2 = O2 + 2 H2O</text>
        <dbReference type="Rhea" id="RHEA:20309"/>
        <dbReference type="ChEBI" id="CHEBI:15377"/>
        <dbReference type="ChEBI" id="CHEBI:15379"/>
        <dbReference type="ChEBI" id="CHEBI:16240"/>
        <dbReference type="EC" id="1.11.1.6"/>
    </reaction>
</comment>
<comment type="cofactor">
    <cofactor evidence="2">
        <name>heme</name>
        <dbReference type="ChEBI" id="CHEBI:30413"/>
    </cofactor>
</comment>
<comment type="subcellular location">
    <subcellularLocation>
        <location evidence="2">Peroxisome matrix</location>
    </subcellularLocation>
</comment>
<comment type="similarity">
    <text evidence="6">Belongs to the catalase family.</text>
</comment>
<comment type="sequence caution" evidence="6">
    <conflict type="erroneous initiation">
        <sequence resource="EMBL-CDS" id="BAA13788"/>
    </conflict>
</comment>
<sequence>MNSKDSNTVPVYTTNTGCPIFNPMAAARVGKGGPVLLQDSHLIDVFQHFDRERIPERVVHAKGSGAFGEFECTDDITKYTKHTMFSKVGKKTPMVARFSTVGGERGTPDTARDPRGFALKFYTDEGIFDMVGNNTPVFFLRDPAKFPLFIHTQKRNPQNDMKDATMFWDYLSQNAESIHQVMILFSDLGGTPYSYRFMDGFSSHTYKFVNDKGEFYYCKWHFITNQGTKGLTNEEAAALDGSNPDHARQDLFEAIERGDYPSWTLYVQVMTPQEAEKYRYNIFDLTKVWPHKDVPMQRVGRFTLNQNPTNFFADIEQAGFSPSHMVPGIEVSADPVLQVRTFSYPDTHRHRLGANFEQIPVNSPKCPVFNYSRDGPMNVNGNQGNWPNYPSSIRPLAKVQYEPDEGHEKWVGQVTYHMDEITDVDFEQPRAFWQNVLGKKPGQQDNFVKNVAGHLSGAISPVRERQYGVFTRVDSELGRRIREATEAEVKKMEEKAPKPINKGEPHMFQGSS</sequence>
<reference key="1">
    <citation type="journal article" date="1995" name="J. Biochem.">
        <title>Transcriptional regulation of catalase gene in the fission yeast Schizosaccharomyces pombe: molecular cloning of the catalase gene and northern blot analyses of the transcript.</title>
        <authorList>
            <person name="Nakagawa C.W."/>
            <person name="Mutoh N."/>
            <person name="Hayashi Y."/>
        </authorList>
    </citation>
    <scope>NUCLEOTIDE SEQUENCE [GENOMIC DNA]</scope>
    <scope>PARTIAL PROTEIN SEQUENCE</scope>
    <source>
        <strain>972 / ATCC 24843</strain>
    </source>
</reference>
<reference key="2">
    <citation type="journal article" date="1997" name="DNA Res.">
        <title>Identification of open reading frames in Schizosaccharomyces pombe cDNAs.</title>
        <authorList>
            <person name="Yoshioka S."/>
            <person name="Kato K."/>
            <person name="Nakai K."/>
            <person name="Okayama H."/>
            <person name="Nojima H."/>
        </authorList>
    </citation>
    <scope>NUCLEOTIDE SEQUENCE [LARGE SCALE MRNA]</scope>
    <source>
        <strain>PR745</strain>
    </source>
</reference>
<reference key="3">
    <citation type="journal article" date="2002" name="Nature">
        <title>The genome sequence of Schizosaccharomyces pombe.</title>
        <authorList>
            <person name="Wood V."/>
            <person name="Gwilliam R."/>
            <person name="Rajandream M.A."/>
            <person name="Lyne M.H."/>
            <person name="Lyne R."/>
            <person name="Stewart A."/>
            <person name="Sgouros J.G."/>
            <person name="Peat N."/>
            <person name="Hayles J."/>
            <person name="Baker S.G."/>
            <person name="Basham D."/>
            <person name="Bowman S."/>
            <person name="Brooks K."/>
            <person name="Brown D."/>
            <person name="Brown S."/>
            <person name="Chillingworth T."/>
            <person name="Churcher C.M."/>
            <person name="Collins M."/>
            <person name="Connor R."/>
            <person name="Cronin A."/>
            <person name="Davis P."/>
            <person name="Feltwell T."/>
            <person name="Fraser A."/>
            <person name="Gentles S."/>
            <person name="Goble A."/>
            <person name="Hamlin N."/>
            <person name="Harris D.E."/>
            <person name="Hidalgo J."/>
            <person name="Hodgson G."/>
            <person name="Holroyd S."/>
            <person name="Hornsby T."/>
            <person name="Howarth S."/>
            <person name="Huckle E.J."/>
            <person name="Hunt S."/>
            <person name="Jagels K."/>
            <person name="James K.D."/>
            <person name="Jones L."/>
            <person name="Jones M."/>
            <person name="Leather S."/>
            <person name="McDonald S."/>
            <person name="McLean J."/>
            <person name="Mooney P."/>
            <person name="Moule S."/>
            <person name="Mungall K.L."/>
            <person name="Murphy L.D."/>
            <person name="Niblett D."/>
            <person name="Odell C."/>
            <person name="Oliver K."/>
            <person name="O'Neil S."/>
            <person name="Pearson D."/>
            <person name="Quail M.A."/>
            <person name="Rabbinowitsch E."/>
            <person name="Rutherford K.M."/>
            <person name="Rutter S."/>
            <person name="Saunders D."/>
            <person name="Seeger K."/>
            <person name="Sharp S."/>
            <person name="Skelton J."/>
            <person name="Simmonds M.N."/>
            <person name="Squares R."/>
            <person name="Squares S."/>
            <person name="Stevens K."/>
            <person name="Taylor K."/>
            <person name="Taylor R.G."/>
            <person name="Tivey A."/>
            <person name="Walsh S.V."/>
            <person name="Warren T."/>
            <person name="Whitehead S."/>
            <person name="Woodward J.R."/>
            <person name="Volckaert G."/>
            <person name="Aert R."/>
            <person name="Robben J."/>
            <person name="Grymonprez B."/>
            <person name="Weltjens I."/>
            <person name="Vanstreels E."/>
            <person name="Rieger M."/>
            <person name="Schaefer M."/>
            <person name="Mueller-Auer S."/>
            <person name="Gabel C."/>
            <person name="Fuchs M."/>
            <person name="Duesterhoeft A."/>
            <person name="Fritzc C."/>
            <person name="Holzer E."/>
            <person name="Moestl D."/>
            <person name="Hilbert H."/>
            <person name="Borzym K."/>
            <person name="Langer I."/>
            <person name="Beck A."/>
            <person name="Lehrach H."/>
            <person name="Reinhardt R."/>
            <person name="Pohl T.M."/>
            <person name="Eger P."/>
            <person name="Zimmermann W."/>
            <person name="Wedler H."/>
            <person name="Wambutt R."/>
            <person name="Purnelle B."/>
            <person name="Goffeau A."/>
            <person name="Cadieu E."/>
            <person name="Dreano S."/>
            <person name="Gloux S."/>
            <person name="Lelaure V."/>
            <person name="Mottier S."/>
            <person name="Galibert F."/>
            <person name="Aves S.J."/>
            <person name="Xiang Z."/>
            <person name="Hunt C."/>
            <person name="Moore K."/>
            <person name="Hurst S.M."/>
            <person name="Lucas M."/>
            <person name="Rochet M."/>
            <person name="Gaillardin C."/>
            <person name="Tallada V.A."/>
            <person name="Garzon A."/>
            <person name="Thode G."/>
            <person name="Daga R.R."/>
            <person name="Cruzado L."/>
            <person name="Jimenez J."/>
            <person name="Sanchez M."/>
            <person name="del Rey F."/>
            <person name="Benito J."/>
            <person name="Dominguez A."/>
            <person name="Revuelta J.L."/>
            <person name="Moreno S."/>
            <person name="Armstrong J."/>
            <person name="Forsburg S.L."/>
            <person name="Cerutti L."/>
            <person name="Lowe T."/>
            <person name="McCombie W.R."/>
            <person name="Paulsen I."/>
            <person name="Potashkin J."/>
            <person name="Shpakovski G.V."/>
            <person name="Ussery D."/>
            <person name="Barrell B.G."/>
            <person name="Nurse P."/>
        </authorList>
    </citation>
    <scope>NUCLEOTIDE SEQUENCE [LARGE SCALE GENOMIC DNA]</scope>
    <source>
        <strain>972 / ATCC 24843</strain>
    </source>
</reference>
<reference key="4">
    <citation type="journal article" date="2008" name="J. Proteome Res.">
        <title>Phosphoproteome analysis of fission yeast.</title>
        <authorList>
            <person name="Wilson-Grady J.T."/>
            <person name="Villen J."/>
            <person name="Gygi S.P."/>
        </authorList>
    </citation>
    <scope>PHOSPHORYLATION [LARGE SCALE ANALYSIS] AT SER-363</scope>
    <scope>IDENTIFICATION BY MASS SPECTROMETRY</scope>
</reference>